<evidence type="ECO:0000255" key="1">
    <source>
        <dbReference type="HAMAP-Rule" id="MF_00279"/>
    </source>
</evidence>
<sequence>MTVKLGVNIDHVATLRSARGADFPDPLTAAKVCLGMGAEFIVVHLRGDRRHIKDKDIENLCKTYPGKIHLECAATKEMQDIALKYKPASVCLVPEFKGELTTRGGLNLNKKNFENISKITTNLQAKGIKVSLFINPAAEEVRLAKKTGAQIIELCTGPYSEAKTKKQQYKELEDLAMSSILGAELGLEVHSGHGLNYENVVPVANLEAMECLNIGFAIIAKSVFTGLAAAVMEMQEAVKERY</sequence>
<feature type="chain" id="PRO_1000114808" description="Pyridoxine 5'-phosphate synthase">
    <location>
        <begin position="1"/>
        <end position="242"/>
    </location>
</feature>
<feature type="active site" description="Proton acceptor" evidence="1">
    <location>
        <position position="44"/>
    </location>
</feature>
<feature type="active site" description="Proton acceptor" evidence="1">
    <location>
        <position position="71"/>
    </location>
</feature>
<feature type="active site" description="Proton donor" evidence="1">
    <location>
        <position position="193"/>
    </location>
</feature>
<feature type="binding site" evidence="1">
    <location>
        <position position="8"/>
    </location>
    <ligand>
        <name>3-amino-2-oxopropyl phosphate</name>
        <dbReference type="ChEBI" id="CHEBI:57279"/>
    </ligand>
</feature>
<feature type="binding site" evidence="1">
    <location>
        <begin position="10"/>
        <end position="11"/>
    </location>
    <ligand>
        <name>1-deoxy-D-xylulose 5-phosphate</name>
        <dbReference type="ChEBI" id="CHEBI:57792"/>
    </ligand>
</feature>
<feature type="binding site" evidence="1">
    <location>
        <position position="19"/>
    </location>
    <ligand>
        <name>3-amino-2-oxopropyl phosphate</name>
        <dbReference type="ChEBI" id="CHEBI:57279"/>
    </ligand>
</feature>
<feature type="binding site" evidence="1">
    <location>
        <position position="46"/>
    </location>
    <ligand>
        <name>1-deoxy-D-xylulose 5-phosphate</name>
        <dbReference type="ChEBI" id="CHEBI:57792"/>
    </ligand>
</feature>
<feature type="binding site" evidence="1">
    <location>
        <position position="51"/>
    </location>
    <ligand>
        <name>1-deoxy-D-xylulose 5-phosphate</name>
        <dbReference type="ChEBI" id="CHEBI:57792"/>
    </ligand>
</feature>
<feature type="binding site" evidence="1">
    <location>
        <position position="101"/>
    </location>
    <ligand>
        <name>1-deoxy-D-xylulose 5-phosphate</name>
        <dbReference type="ChEBI" id="CHEBI:57792"/>
    </ligand>
</feature>
<feature type="binding site" evidence="1">
    <location>
        <position position="194"/>
    </location>
    <ligand>
        <name>3-amino-2-oxopropyl phosphate</name>
        <dbReference type="ChEBI" id="CHEBI:57279"/>
    </ligand>
</feature>
<feature type="binding site" evidence="1">
    <location>
        <begin position="215"/>
        <end position="216"/>
    </location>
    <ligand>
        <name>3-amino-2-oxopropyl phosphate</name>
        <dbReference type="ChEBI" id="CHEBI:57279"/>
    </ligand>
</feature>
<feature type="site" description="Transition state stabilizer" evidence="1">
    <location>
        <position position="153"/>
    </location>
</feature>
<protein>
    <recommendedName>
        <fullName evidence="1">Pyridoxine 5'-phosphate synthase</fullName>
        <shortName evidence="1">PNP synthase</shortName>
        <ecNumber evidence="1">2.6.99.2</ecNumber>
    </recommendedName>
</protein>
<accession>B2KEC4</accession>
<name>PDXJ_ELUMP</name>
<dbReference type="EC" id="2.6.99.2" evidence="1"/>
<dbReference type="EMBL" id="CP001055">
    <property type="protein sequence ID" value="ACC98870.1"/>
    <property type="molecule type" value="Genomic_DNA"/>
</dbReference>
<dbReference type="RefSeq" id="WP_012415485.1">
    <property type="nucleotide sequence ID" value="NC_010644.1"/>
</dbReference>
<dbReference type="SMR" id="B2KEC4"/>
<dbReference type="STRING" id="445932.Emin_1320"/>
<dbReference type="KEGG" id="emi:Emin_1320"/>
<dbReference type="HOGENOM" id="CLU_074563_0_0_0"/>
<dbReference type="OrthoDB" id="9806590at2"/>
<dbReference type="UniPathway" id="UPA00244">
    <property type="reaction ID" value="UER00313"/>
</dbReference>
<dbReference type="Proteomes" id="UP000001029">
    <property type="component" value="Chromosome"/>
</dbReference>
<dbReference type="GO" id="GO:0005829">
    <property type="term" value="C:cytosol"/>
    <property type="evidence" value="ECO:0007669"/>
    <property type="project" value="TreeGrafter"/>
</dbReference>
<dbReference type="GO" id="GO:0033856">
    <property type="term" value="F:pyridoxine 5'-phosphate synthase activity"/>
    <property type="evidence" value="ECO:0007669"/>
    <property type="project" value="UniProtKB-EC"/>
</dbReference>
<dbReference type="GO" id="GO:0008615">
    <property type="term" value="P:pyridoxine biosynthetic process"/>
    <property type="evidence" value="ECO:0007669"/>
    <property type="project" value="UniProtKB-UniRule"/>
</dbReference>
<dbReference type="CDD" id="cd00003">
    <property type="entry name" value="PNPsynthase"/>
    <property type="match status" value="1"/>
</dbReference>
<dbReference type="Gene3D" id="3.20.20.70">
    <property type="entry name" value="Aldolase class I"/>
    <property type="match status" value="1"/>
</dbReference>
<dbReference type="HAMAP" id="MF_00279">
    <property type="entry name" value="PdxJ"/>
    <property type="match status" value="1"/>
</dbReference>
<dbReference type="InterPro" id="IPR013785">
    <property type="entry name" value="Aldolase_TIM"/>
</dbReference>
<dbReference type="InterPro" id="IPR004569">
    <property type="entry name" value="PyrdxlP_synth_PdxJ"/>
</dbReference>
<dbReference type="InterPro" id="IPR036130">
    <property type="entry name" value="Pyridoxine-5'_phos_synth"/>
</dbReference>
<dbReference type="NCBIfam" id="TIGR00559">
    <property type="entry name" value="pdxJ"/>
    <property type="match status" value="1"/>
</dbReference>
<dbReference type="NCBIfam" id="NF003625">
    <property type="entry name" value="PRK05265.1-3"/>
    <property type="match status" value="1"/>
</dbReference>
<dbReference type="NCBIfam" id="NF003627">
    <property type="entry name" value="PRK05265.1-5"/>
    <property type="match status" value="1"/>
</dbReference>
<dbReference type="PANTHER" id="PTHR30456">
    <property type="entry name" value="PYRIDOXINE 5'-PHOSPHATE SYNTHASE"/>
    <property type="match status" value="1"/>
</dbReference>
<dbReference type="PANTHER" id="PTHR30456:SF0">
    <property type="entry name" value="PYRIDOXINE 5'-PHOSPHATE SYNTHASE"/>
    <property type="match status" value="1"/>
</dbReference>
<dbReference type="Pfam" id="PF03740">
    <property type="entry name" value="PdxJ"/>
    <property type="match status" value="1"/>
</dbReference>
<dbReference type="SUPFAM" id="SSF63892">
    <property type="entry name" value="Pyridoxine 5'-phosphate synthase"/>
    <property type="match status" value="1"/>
</dbReference>
<organism>
    <name type="scientific">Elusimicrobium minutum (strain Pei191)</name>
    <dbReference type="NCBI Taxonomy" id="445932"/>
    <lineage>
        <taxon>Bacteria</taxon>
        <taxon>Pseudomonadati</taxon>
        <taxon>Elusimicrobiota</taxon>
        <taxon>Elusimicrobia</taxon>
        <taxon>Elusimicrobiales</taxon>
        <taxon>Elusimicrobiaceae</taxon>
        <taxon>Elusimicrobium</taxon>
    </lineage>
</organism>
<reference key="1">
    <citation type="journal article" date="2009" name="Appl. Environ. Microbiol.">
        <title>Genomic analysis of 'Elusimicrobium minutum,' the first cultivated representative of the phylum 'Elusimicrobia' (formerly termite group 1).</title>
        <authorList>
            <person name="Herlemann D.P.R."/>
            <person name="Geissinger O."/>
            <person name="Ikeda-Ohtsubo W."/>
            <person name="Kunin V."/>
            <person name="Sun H."/>
            <person name="Lapidus A."/>
            <person name="Hugenholtz P."/>
            <person name="Brune A."/>
        </authorList>
    </citation>
    <scope>NUCLEOTIDE SEQUENCE [LARGE SCALE GENOMIC DNA]</scope>
    <source>
        <strain>Pei191</strain>
    </source>
</reference>
<comment type="function">
    <text evidence="1">Catalyzes the complicated ring closure reaction between the two acyclic compounds 1-deoxy-D-xylulose-5-phosphate (DXP) and 3-amino-2-oxopropyl phosphate (1-amino-acetone-3-phosphate or AAP) to form pyridoxine 5'-phosphate (PNP) and inorganic phosphate.</text>
</comment>
<comment type="catalytic activity">
    <reaction evidence="1">
        <text>3-amino-2-oxopropyl phosphate + 1-deoxy-D-xylulose 5-phosphate = pyridoxine 5'-phosphate + phosphate + 2 H2O + H(+)</text>
        <dbReference type="Rhea" id="RHEA:15265"/>
        <dbReference type="ChEBI" id="CHEBI:15377"/>
        <dbReference type="ChEBI" id="CHEBI:15378"/>
        <dbReference type="ChEBI" id="CHEBI:43474"/>
        <dbReference type="ChEBI" id="CHEBI:57279"/>
        <dbReference type="ChEBI" id="CHEBI:57792"/>
        <dbReference type="ChEBI" id="CHEBI:58589"/>
        <dbReference type="EC" id="2.6.99.2"/>
    </reaction>
</comment>
<comment type="pathway">
    <text evidence="1">Cofactor biosynthesis; pyridoxine 5'-phosphate biosynthesis; pyridoxine 5'-phosphate from D-erythrose 4-phosphate: step 5/5.</text>
</comment>
<comment type="subunit">
    <text evidence="1">Homooctamer; tetramer of dimers.</text>
</comment>
<comment type="subcellular location">
    <subcellularLocation>
        <location evidence="1">Cytoplasm</location>
    </subcellularLocation>
</comment>
<comment type="similarity">
    <text evidence="1">Belongs to the PNP synthase family.</text>
</comment>
<gene>
    <name evidence="1" type="primary">pdxJ</name>
    <name type="ordered locus">Emin_1320</name>
</gene>
<keyword id="KW-0963">Cytoplasm</keyword>
<keyword id="KW-0664">Pyridoxine biosynthesis</keyword>
<keyword id="KW-1185">Reference proteome</keyword>
<keyword id="KW-0808">Transferase</keyword>
<proteinExistence type="inferred from homology"/>